<accession>Q9BP90</accession>
<feature type="signal peptide" evidence="2">
    <location>
        <begin position="1"/>
        <end position="22"/>
    </location>
</feature>
<feature type="propeptide" id="PRO_0000404774" evidence="1">
    <location>
        <begin position="23"/>
        <end position="46"/>
    </location>
</feature>
<feature type="peptide" id="PRO_0000404775" description="Conotoxin ArMKLT2-0251">
    <location>
        <begin position="49"/>
        <end position="77"/>
    </location>
</feature>
<feature type="modified residue" description="Pyrrolidone carboxylic acid" evidence="1">
    <location>
        <position position="49"/>
    </location>
</feature>
<feature type="disulfide bond" evidence="1">
    <location>
        <begin position="50"/>
        <end position="65"/>
    </location>
</feature>
<feature type="disulfide bond" evidence="1">
    <location>
        <begin position="57"/>
        <end position="68"/>
    </location>
</feature>
<feature type="disulfide bond" evidence="1">
    <location>
        <begin position="64"/>
        <end position="73"/>
    </location>
</feature>
<feature type="unsure residue" description="I or L">
    <location>
        <position position="13"/>
    </location>
</feature>
<evidence type="ECO:0000250" key="1"/>
<evidence type="ECO:0000255" key="2"/>
<evidence type="ECO:0000305" key="3"/>
<name>O166_CONAE</name>
<proteinExistence type="evidence at transcript level"/>
<organism>
    <name type="scientific">Conus arenatus</name>
    <name type="common">Sand-dusted cone</name>
    <dbReference type="NCBI Taxonomy" id="89451"/>
    <lineage>
        <taxon>Eukaryota</taxon>
        <taxon>Metazoa</taxon>
        <taxon>Spiralia</taxon>
        <taxon>Lophotrochozoa</taxon>
        <taxon>Mollusca</taxon>
        <taxon>Gastropoda</taxon>
        <taxon>Caenogastropoda</taxon>
        <taxon>Neogastropoda</taxon>
        <taxon>Conoidea</taxon>
        <taxon>Conidae</taxon>
        <taxon>Conus</taxon>
    </lineage>
</organism>
<protein>
    <recommendedName>
        <fullName>Conotoxin ArMKLT2-0251</fullName>
    </recommendedName>
</protein>
<reference key="1">
    <citation type="journal article" date="2001" name="Mol. Biol. Evol.">
        <title>Mechanisms for evolving hypervariability: the case of conopeptides.</title>
        <authorList>
            <person name="Conticello S.G."/>
            <person name="Gilad Y."/>
            <person name="Avidan N."/>
            <person name="Ben-Asher E."/>
            <person name="Levy Z."/>
            <person name="Fainzilber M."/>
        </authorList>
    </citation>
    <scope>NUCLEOTIDE SEQUENCE [MRNA]</scope>
    <source>
        <tissue>Venom duct</tissue>
    </source>
</reference>
<keyword id="KW-0165">Cleavage on pair of basic residues</keyword>
<keyword id="KW-1015">Disulfide bond</keyword>
<keyword id="KW-0960">Knottin</keyword>
<keyword id="KW-0528">Neurotoxin</keyword>
<keyword id="KW-0873">Pyrrolidone carboxylic acid</keyword>
<keyword id="KW-0964">Secreted</keyword>
<keyword id="KW-0732">Signal</keyword>
<keyword id="KW-0800">Toxin</keyword>
<sequence>MKLTCVLIVAVLILTACQLIAADDSRDLKRFSRRKMRDGMLNTKNMKRQCLPPLSLCTMDDDECCDDCXLFLCLVTS</sequence>
<dbReference type="EMBL" id="AF215048">
    <property type="protein sequence ID" value="AAG60476.2"/>
    <property type="molecule type" value="mRNA"/>
</dbReference>
<dbReference type="ConoServer" id="735">
    <property type="toxin name" value="Ar6.6 precursor"/>
</dbReference>
<dbReference type="GO" id="GO:0005576">
    <property type="term" value="C:extracellular region"/>
    <property type="evidence" value="ECO:0007669"/>
    <property type="project" value="UniProtKB-SubCell"/>
</dbReference>
<dbReference type="GO" id="GO:0008200">
    <property type="term" value="F:ion channel inhibitor activity"/>
    <property type="evidence" value="ECO:0007669"/>
    <property type="project" value="InterPro"/>
</dbReference>
<dbReference type="GO" id="GO:0090729">
    <property type="term" value="F:toxin activity"/>
    <property type="evidence" value="ECO:0007669"/>
    <property type="project" value="UniProtKB-KW"/>
</dbReference>
<dbReference type="InterPro" id="IPR004214">
    <property type="entry name" value="Conotoxin"/>
</dbReference>
<dbReference type="Pfam" id="PF02950">
    <property type="entry name" value="Conotoxin"/>
    <property type="match status" value="1"/>
</dbReference>
<comment type="subcellular location">
    <subcellularLocation>
        <location evidence="1">Secreted</location>
    </subcellularLocation>
</comment>
<comment type="tissue specificity">
    <text>Expressed by the venom duct.</text>
</comment>
<comment type="domain">
    <text evidence="1">The presence of a 'disulfide through disulfide knot' structurally defines this protein as a knottin.</text>
</comment>
<comment type="domain">
    <text>The cysteine framework is VI/VII (C-C-CC-C-C).</text>
</comment>
<comment type="similarity">
    <text evidence="3">Belongs to the conotoxin O1 superfamily.</text>
</comment>